<name>NDK_XYLFA</name>
<organism>
    <name type="scientific">Xylella fastidiosa (strain 9a5c)</name>
    <dbReference type="NCBI Taxonomy" id="160492"/>
    <lineage>
        <taxon>Bacteria</taxon>
        <taxon>Pseudomonadati</taxon>
        <taxon>Pseudomonadota</taxon>
        <taxon>Gammaproteobacteria</taxon>
        <taxon>Lysobacterales</taxon>
        <taxon>Lysobacteraceae</taxon>
        <taxon>Xylella</taxon>
    </lineage>
</organism>
<dbReference type="EC" id="2.7.4.6" evidence="1"/>
<dbReference type="EMBL" id="AE003849">
    <property type="protein sequence ID" value="AAF83268.1"/>
    <property type="molecule type" value="Genomic_DNA"/>
</dbReference>
<dbReference type="PIR" id="E82803">
    <property type="entry name" value="E82803"/>
</dbReference>
<dbReference type="RefSeq" id="WP_010892986.1">
    <property type="nucleotide sequence ID" value="NC_002488.3"/>
</dbReference>
<dbReference type="SMR" id="Q9PG44"/>
<dbReference type="STRING" id="160492.XF_0458"/>
<dbReference type="KEGG" id="xfa:XF_0458"/>
<dbReference type="eggNOG" id="COG0105">
    <property type="taxonomic scope" value="Bacteria"/>
</dbReference>
<dbReference type="HOGENOM" id="CLU_060216_8_1_6"/>
<dbReference type="Proteomes" id="UP000000812">
    <property type="component" value="Chromosome"/>
</dbReference>
<dbReference type="GO" id="GO:0005737">
    <property type="term" value="C:cytoplasm"/>
    <property type="evidence" value="ECO:0007669"/>
    <property type="project" value="UniProtKB-SubCell"/>
</dbReference>
<dbReference type="GO" id="GO:0005524">
    <property type="term" value="F:ATP binding"/>
    <property type="evidence" value="ECO:0007669"/>
    <property type="project" value="UniProtKB-UniRule"/>
</dbReference>
<dbReference type="GO" id="GO:0046872">
    <property type="term" value="F:metal ion binding"/>
    <property type="evidence" value="ECO:0007669"/>
    <property type="project" value="UniProtKB-KW"/>
</dbReference>
<dbReference type="GO" id="GO:0004550">
    <property type="term" value="F:nucleoside diphosphate kinase activity"/>
    <property type="evidence" value="ECO:0007669"/>
    <property type="project" value="UniProtKB-UniRule"/>
</dbReference>
<dbReference type="GO" id="GO:0006241">
    <property type="term" value="P:CTP biosynthetic process"/>
    <property type="evidence" value="ECO:0007669"/>
    <property type="project" value="UniProtKB-UniRule"/>
</dbReference>
<dbReference type="GO" id="GO:0006183">
    <property type="term" value="P:GTP biosynthetic process"/>
    <property type="evidence" value="ECO:0007669"/>
    <property type="project" value="UniProtKB-UniRule"/>
</dbReference>
<dbReference type="GO" id="GO:0006228">
    <property type="term" value="P:UTP biosynthetic process"/>
    <property type="evidence" value="ECO:0007669"/>
    <property type="project" value="UniProtKB-UniRule"/>
</dbReference>
<dbReference type="CDD" id="cd04413">
    <property type="entry name" value="NDPk_I"/>
    <property type="match status" value="1"/>
</dbReference>
<dbReference type="FunFam" id="3.30.70.141:FF:000001">
    <property type="entry name" value="Nucleoside diphosphate kinase"/>
    <property type="match status" value="1"/>
</dbReference>
<dbReference type="Gene3D" id="3.30.70.141">
    <property type="entry name" value="Nucleoside diphosphate kinase-like domain"/>
    <property type="match status" value="1"/>
</dbReference>
<dbReference type="HAMAP" id="MF_00451">
    <property type="entry name" value="NDP_kinase"/>
    <property type="match status" value="1"/>
</dbReference>
<dbReference type="InterPro" id="IPR034907">
    <property type="entry name" value="NDK-like_dom"/>
</dbReference>
<dbReference type="InterPro" id="IPR036850">
    <property type="entry name" value="NDK-like_dom_sf"/>
</dbReference>
<dbReference type="InterPro" id="IPR001564">
    <property type="entry name" value="Nucleoside_diP_kinase"/>
</dbReference>
<dbReference type="InterPro" id="IPR023005">
    <property type="entry name" value="Nucleoside_diP_kinase_AS"/>
</dbReference>
<dbReference type="NCBIfam" id="NF001908">
    <property type="entry name" value="PRK00668.1"/>
    <property type="match status" value="1"/>
</dbReference>
<dbReference type="PANTHER" id="PTHR11349">
    <property type="entry name" value="NUCLEOSIDE DIPHOSPHATE KINASE"/>
    <property type="match status" value="1"/>
</dbReference>
<dbReference type="Pfam" id="PF00334">
    <property type="entry name" value="NDK"/>
    <property type="match status" value="1"/>
</dbReference>
<dbReference type="PRINTS" id="PR01243">
    <property type="entry name" value="NUCDPKINASE"/>
</dbReference>
<dbReference type="SMART" id="SM00562">
    <property type="entry name" value="NDK"/>
    <property type="match status" value="1"/>
</dbReference>
<dbReference type="SUPFAM" id="SSF54919">
    <property type="entry name" value="Nucleoside diphosphate kinase, NDK"/>
    <property type="match status" value="1"/>
</dbReference>
<dbReference type="PROSITE" id="PS00469">
    <property type="entry name" value="NDPK"/>
    <property type="match status" value="1"/>
</dbReference>
<dbReference type="PROSITE" id="PS51374">
    <property type="entry name" value="NDPK_LIKE"/>
    <property type="match status" value="1"/>
</dbReference>
<gene>
    <name evidence="1" type="primary">ndk</name>
    <name type="ordered locus">XF_0458</name>
</gene>
<evidence type="ECO:0000255" key="1">
    <source>
        <dbReference type="HAMAP-Rule" id="MF_00451"/>
    </source>
</evidence>
<proteinExistence type="inferred from homology"/>
<accession>Q9PG44</accession>
<keyword id="KW-0067">ATP-binding</keyword>
<keyword id="KW-0963">Cytoplasm</keyword>
<keyword id="KW-0418">Kinase</keyword>
<keyword id="KW-0460">Magnesium</keyword>
<keyword id="KW-0479">Metal-binding</keyword>
<keyword id="KW-0546">Nucleotide metabolism</keyword>
<keyword id="KW-0547">Nucleotide-binding</keyword>
<keyword id="KW-0597">Phosphoprotein</keyword>
<keyword id="KW-0808">Transferase</keyword>
<sequence length="141" mass="15512">MVLERTLSIIKPDAVAKNVIGDIYSRFEKAGLKVVAAKYKQLSRREAEGFYAVHRDRPFFNALVEFMISGPVMIQVLESENAVARHRELLGATNPKDAALGTIRADFAESIEANAAHGSDSVENAAIEVAYFFAATEIILR</sequence>
<protein>
    <recommendedName>
        <fullName evidence="1">Nucleoside diphosphate kinase</fullName>
        <shortName evidence="1">NDK</shortName>
        <shortName evidence="1">NDP kinase</shortName>
        <ecNumber evidence="1">2.7.4.6</ecNumber>
    </recommendedName>
    <alternativeName>
        <fullName evidence="1">Nucleoside-2-P kinase</fullName>
    </alternativeName>
</protein>
<comment type="function">
    <text evidence="1">Major role in the synthesis of nucleoside triphosphates other than ATP. The ATP gamma phosphate is transferred to the NDP beta phosphate via a ping-pong mechanism, using a phosphorylated active-site intermediate.</text>
</comment>
<comment type="catalytic activity">
    <reaction evidence="1">
        <text>a 2'-deoxyribonucleoside 5'-diphosphate + ATP = a 2'-deoxyribonucleoside 5'-triphosphate + ADP</text>
        <dbReference type="Rhea" id="RHEA:44640"/>
        <dbReference type="ChEBI" id="CHEBI:30616"/>
        <dbReference type="ChEBI" id="CHEBI:61560"/>
        <dbReference type="ChEBI" id="CHEBI:73316"/>
        <dbReference type="ChEBI" id="CHEBI:456216"/>
        <dbReference type="EC" id="2.7.4.6"/>
    </reaction>
</comment>
<comment type="catalytic activity">
    <reaction evidence="1">
        <text>a ribonucleoside 5'-diphosphate + ATP = a ribonucleoside 5'-triphosphate + ADP</text>
        <dbReference type="Rhea" id="RHEA:18113"/>
        <dbReference type="ChEBI" id="CHEBI:30616"/>
        <dbReference type="ChEBI" id="CHEBI:57930"/>
        <dbReference type="ChEBI" id="CHEBI:61557"/>
        <dbReference type="ChEBI" id="CHEBI:456216"/>
        <dbReference type="EC" id="2.7.4.6"/>
    </reaction>
</comment>
<comment type="cofactor">
    <cofactor evidence="1">
        <name>Mg(2+)</name>
        <dbReference type="ChEBI" id="CHEBI:18420"/>
    </cofactor>
</comment>
<comment type="subunit">
    <text evidence="1">Homotetramer.</text>
</comment>
<comment type="subcellular location">
    <subcellularLocation>
        <location evidence="1">Cytoplasm</location>
    </subcellularLocation>
</comment>
<comment type="similarity">
    <text evidence="1">Belongs to the NDK family.</text>
</comment>
<feature type="chain" id="PRO_0000137082" description="Nucleoside diphosphate kinase">
    <location>
        <begin position="1"/>
        <end position="141"/>
    </location>
</feature>
<feature type="active site" description="Pros-phosphohistidine intermediate" evidence="1">
    <location>
        <position position="117"/>
    </location>
</feature>
<feature type="binding site" evidence="1">
    <location>
        <position position="11"/>
    </location>
    <ligand>
        <name>ATP</name>
        <dbReference type="ChEBI" id="CHEBI:30616"/>
    </ligand>
</feature>
<feature type="binding site" evidence="1">
    <location>
        <position position="59"/>
    </location>
    <ligand>
        <name>ATP</name>
        <dbReference type="ChEBI" id="CHEBI:30616"/>
    </ligand>
</feature>
<feature type="binding site" evidence="1">
    <location>
        <position position="87"/>
    </location>
    <ligand>
        <name>ATP</name>
        <dbReference type="ChEBI" id="CHEBI:30616"/>
    </ligand>
</feature>
<feature type="binding site" evidence="1">
    <location>
        <position position="93"/>
    </location>
    <ligand>
        <name>ATP</name>
        <dbReference type="ChEBI" id="CHEBI:30616"/>
    </ligand>
</feature>
<feature type="binding site" evidence="1">
    <location>
        <position position="104"/>
    </location>
    <ligand>
        <name>ATP</name>
        <dbReference type="ChEBI" id="CHEBI:30616"/>
    </ligand>
</feature>
<feature type="binding site" evidence="1">
    <location>
        <position position="114"/>
    </location>
    <ligand>
        <name>ATP</name>
        <dbReference type="ChEBI" id="CHEBI:30616"/>
    </ligand>
</feature>
<reference key="1">
    <citation type="journal article" date="2000" name="Nature">
        <title>The genome sequence of the plant pathogen Xylella fastidiosa.</title>
        <authorList>
            <person name="Simpson A.J.G."/>
            <person name="Reinach F.C."/>
            <person name="Arruda P."/>
            <person name="Abreu F.A."/>
            <person name="Acencio M."/>
            <person name="Alvarenga R."/>
            <person name="Alves L.M.C."/>
            <person name="Araya J.E."/>
            <person name="Baia G.S."/>
            <person name="Baptista C.S."/>
            <person name="Barros M.H."/>
            <person name="Bonaccorsi E.D."/>
            <person name="Bordin S."/>
            <person name="Bove J.M."/>
            <person name="Briones M.R.S."/>
            <person name="Bueno M.R.P."/>
            <person name="Camargo A.A."/>
            <person name="Camargo L.E.A."/>
            <person name="Carraro D.M."/>
            <person name="Carrer H."/>
            <person name="Colauto N.B."/>
            <person name="Colombo C."/>
            <person name="Costa F.F."/>
            <person name="Costa M.C.R."/>
            <person name="Costa-Neto C.M."/>
            <person name="Coutinho L.L."/>
            <person name="Cristofani M."/>
            <person name="Dias-Neto E."/>
            <person name="Docena C."/>
            <person name="El-Dorry H."/>
            <person name="Facincani A.P."/>
            <person name="Ferreira A.J.S."/>
            <person name="Ferreira V.C.A."/>
            <person name="Ferro J.A."/>
            <person name="Fraga J.S."/>
            <person name="Franca S.C."/>
            <person name="Franco M.C."/>
            <person name="Frohme M."/>
            <person name="Furlan L.R."/>
            <person name="Garnier M."/>
            <person name="Goldman G.H."/>
            <person name="Goldman M.H.S."/>
            <person name="Gomes S.L."/>
            <person name="Gruber A."/>
            <person name="Ho P.L."/>
            <person name="Hoheisel J.D."/>
            <person name="Junqueira M.L."/>
            <person name="Kemper E.L."/>
            <person name="Kitajima J.P."/>
            <person name="Krieger J.E."/>
            <person name="Kuramae E.E."/>
            <person name="Laigret F."/>
            <person name="Lambais M.R."/>
            <person name="Leite L.C.C."/>
            <person name="Lemos E.G.M."/>
            <person name="Lemos M.V.F."/>
            <person name="Lopes S.A."/>
            <person name="Lopes C.R."/>
            <person name="Machado J.A."/>
            <person name="Machado M.A."/>
            <person name="Madeira A.M.B.N."/>
            <person name="Madeira H.M.F."/>
            <person name="Marino C.L."/>
            <person name="Marques M.V."/>
            <person name="Martins E.A.L."/>
            <person name="Martins E.M.F."/>
            <person name="Matsukuma A.Y."/>
            <person name="Menck C.F.M."/>
            <person name="Miracca E.C."/>
            <person name="Miyaki C.Y."/>
            <person name="Monteiro-Vitorello C.B."/>
            <person name="Moon D.H."/>
            <person name="Nagai M.A."/>
            <person name="Nascimento A.L.T.O."/>
            <person name="Netto L.E.S."/>
            <person name="Nhani A. Jr."/>
            <person name="Nobrega F.G."/>
            <person name="Nunes L.R."/>
            <person name="Oliveira M.A."/>
            <person name="de Oliveira M.C."/>
            <person name="de Oliveira R.C."/>
            <person name="Palmieri D.A."/>
            <person name="Paris A."/>
            <person name="Peixoto B.R."/>
            <person name="Pereira G.A.G."/>
            <person name="Pereira H.A. Jr."/>
            <person name="Pesquero J.B."/>
            <person name="Quaggio R.B."/>
            <person name="Roberto P.G."/>
            <person name="Rodrigues V."/>
            <person name="de Rosa A.J.M."/>
            <person name="de Rosa V.E. Jr."/>
            <person name="de Sa R.G."/>
            <person name="Santelli R.V."/>
            <person name="Sawasaki H.E."/>
            <person name="da Silva A.C.R."/>
            <person name="da Silva A.M."/>
            <person name="da Silva F.R."/>
            <person name="Silva W.A. Jr."/>
            <person name="da Silveira J.F."/>
            <person name="Silvestri M.L.Z."/>
            <person name="Siqueira W.J."/>
            <person name="de Souza A.A."/>
            <person name="de Souza A.P."/>
            <person name="Terenzi M.F."/>
            <person name="Truffi D."/>
            <person name="Tsai S.M."/>
            <person name="Tsuhako M.H."/>
            <person name="Vallada H."/>
            <person name="Van Sluys M.A."/>
            <person name="Verjovski-Almeida S."/>
            <person name="Vettore A.L."/>
            <person name="Zago M.A."/>
            <person name="Zatz M."/>
            <person name="Meidanis J."/>
            <person name="Setubal J.C."/>
        </authorList>
    </citation>
    <scope>NUCLEOTIDE SEQUENCE [LARGE SCALE GENOMIC DNA]</scope>
    <source>
        <strain>9a5c</strain>
    </source>
</reference>